<gene>
    <name evidence="1" type="primary">lipA</name>
    <name type="ordered locus">MAV_2270</name>
</gene>
<name>LIPA_MYCA1</name>
<evidence type="ECO:0000255" key="1">
    <source>
        <dbReference type="HAMAP-Rule" id="MF_00206"/>
    </source>
</evidence>
<evidence type="ECO:0000255" key="2">
    <source>
        <dbReference type="PROSITE-ProRule" id="PRU01266"/>
    </source>
</evidence>
<organism>
    <name type="scientific">Mycobacterium avium (strain 104)</name>
    <dbReference type="NCBI Taxonomy" id="243243"/>
    <lineage>
        <taxon>Bacteria</taxon>
        <taxon>Bacillati</taxon>
        <taxon>Actinomycetota</taxon>
        <taxon>Actinomycetes</taxon>
        <taxon>Mycobacteriales</taxon>
        <taxon>Mycobacteriaceae</taxon>
        <taxon>Mycobacterium</taxon>
        <taxon>Mycobacterium avium complex (MAC)</taxon>
    </lineage>
</organism>
<keyword id="KW-0004">4Fe-4S</keyword>
<keyword id="KW-0963">Cytoplasm</keyword>
<keyword id="KW-0408">Iron</keyword>
<keyword id="KW-0411">Iron-sulfur</keyword>
<keyword id="KW-0479">Metal-binding</keyword>
<keyword id="KW-0949">S-adenosyl-L-methionine</keyword>
<keyword id="KW-0808">Transferase</keyword>
<sequence length="307" mass="34532">MTVAPEGRKLLRLEVRNADTPIERKPPWIRVRARMGPEYTELKSLVRREGLHTVCEEAGCPNIFECWEDREATFLIGGDQCTRRCDFCQIDTGKPAELDRDEPRRVADSVRTMGLRYATVTGVARDDLPDGGAWLYAETVRAIKELNPSTGVELLIPDFNGRPDRLAEVFGSRPEVLAHNVETVPRIFKRIRPAFTYRRSLDVLTAAREAGLVTKSNLILGLGETPDEVRTALADLRGAGCDIITITQYLRPSARHHPVERWVKPEEFVEFARHAEELGFSGVLAGPLVRSSYRAGRLYRQAARARA</sequence>
<feature type="chain" id="PRO_1000012234" description="Lipoyl synthase">
    <location>
        <begin position="1"/>
        <end position="307"/>
    </location>
</feature>
<feature type="domain" description="Radical SAM core" evidence="2">
    <location>
        <begin position="67"/>
        <end position="281"/>
    </location>
</feature>
<feature type="binding site" evidence="1">
    <location>
        <position position="55"/>
    </location>
    <ligand>
        <name>[4Fe-4S] cluster</name>
        <dbReference type="ChEBI" id="CHEBI:49883"/>
        <label>1</label>
    </ligand>
</feature>
<feature type="binding site" evidence="1">
    <location>
        <position position="60"/>
    </location>
    <ligand>
        <name>[4Fe-4S] cluster</name>
        <dbReference type="ChEBI" id="CHEBI:49883"/>
        <label>1</label>
    </ligand>
</feature>
<feature type="binding site" evidence="1">
    <location>
        <position position="66"/>
    </location>
    <ligand>
        <name>[4Fe-4S] cluster</name>
        <dbReference type="ChEBI" id="CHEBI:49883"/>
        <label>1</label>
    </ligand>
</feature>
<feature type="binding site" evidence="1">
    <location>
        <position position="81"/>
    </location>
    <ligand>
        <name>[4Fe-4S] cluster</name>
        <dbReference type="ChEBI" id="CHEBI:49883"/>
        <label>2</label>
        <note>4Fe-4S-S-AdoMet</note>
    </ligand>
</feature>
<feature type="binding site" evidence="1">
    <location>
        <position position="85"/>
    </location>
    <ligand>
        <name>[4Fe-4S] cluster</name>
        <dbReference type="ChEBI" id="CHEBI:49883"/>
        <label>2</label>
        <note>4Fe-4S-S-AdoMet</note>
    </ligand>
</feature>
<feature type="binding site" evidence="1">
    <location>
        <position position="88"/>
    </location>
    <ligand>
        <name>[4Fe-4S] cluster</name>
        <dbReference type="ChEBI" id="CHEBI:49883"/>
        <label>2</label>
        <note>4Fe-4S-S-AdoMet</note>
    </ligand>
</feature>
<feature type="binding site" evidence="1">
    <location>
        <position position="292"/>
    </location>
    <ligand>
        <name>[4Fe-4S] cluster</name>
        <dbReference type="ChEBI" id="CHEBI:49883"/>
        <label>1</label>
    </ligand>
</feature>
<reference key="1">
    <citation type="submission" date="2006-10" db="EMBL/GenBank/DDBJ databases">
        <authorList>
            <person name="Fleischmann R.D."/>
            <person name="Dodson R.J."/>
            <person name="Haft D.H."/>
            <person name="Merkel J.S."/>
            <person name="Nelson W.C."/>
            <person name="Fraser C.M."/>
        </authorList>
    </citation>
    <scope>NUCLEOTIDE SEQUENCE [LARGE SCALE GENOMIC DNA]</scope>
    <source>
        <strain>104</strain>
    </source>
</reference>
<dbReference type="EC" id="2.8.1.8" evidence="1"/>
<dbReference type="EMBL" id="CP000479">
    <property type="protein sequence ID" value="ABK66875.1"/>
    <property type="molecule type" value="Genomic_DNA"/>
</dbReference>
<dbReference type="RefSeq" id="WP_011724695.1">
    <property type="nucleotide sequence ID" value="NC_008595.1"/>
</dbReference>
<dbReference type="SMR" id="A0QEY6"/>
<dbReference type="KEGG" id="mav:MAV_2270"/>
<dbReference type="HOGENOM" id="CLU_033144_2_1_11"/>
<dbReference type="UniPathway" id="UPA00538">
    <property type="reaction ID" value="UER00593"/>
</dbReference>
<dbReference type="Proteomes" id="UP000001574">
    <property type="component" value="Chromosome"/>
</dbReference>
<dbReference type="GO" id="GO:0005737">
    <property type="term" value="C:cytoplasm"/>
    <property type="evidence" value="ECO:0007669"/>
    <property type="project" value="UniProtKB-SubCell"/>
</dbReference>
<dbReference type="GO" id="GO:0051539">
    <property type="term" value="F:4 iron, 4 sulfur cluster binding"/>
    <property type="evidence" value="ECO:0007669"/>
    <property type="project" value="UniProtKB-UniRule"/>
</dbReference>
<dbReference type="GO" id="GO:0016992">
    <property type="term" value="F:lipoate synthase activity"/>
    <property type="evidence" value="ECO:0007669"/>
    <property type="project" value="UniProtKB-UniRule"/>
</dbReference>
<dbReference type="GO" id="GO:0046872">
    <property type="term" value="F:metal ion binding"/>
    <property type="evidence" value="ECO:0007669"/>
    <property type="project" value="UniProtKB-KW"/>
</dbReference>
<dbReference type="CDD" id="cd01335">
    <property type="entry name" value="Radical_SAM"/>
    <property type="match status" value="1"/>
</dbReference>
<dbReference type="FunFam" id="3.20.20.70:FF:000116">
    <property type="entry name" value="Lipoyl synthase"/>
    <property type="match status" value="1"/>
</dbReference>
<dbReference type="Gene3D" id="3.20.20.70">
    <property type="entry name" value="Aldolase class I"/>
    <property type="match status" value="1"/>
</dbReference>
<dbReference type="HAMAP" id="MF_00206">
    <property type="entry name" value="Lipoyl_synth"/>
    <property type="match status" value="1"/>
</dbReference>
<dbReference type="InterPro" id="IPR013785">
    <property type="entry name" value="Aldolase_TIM"/>
</dbReference>
<dbReference type="InterPro" id="IPR006638">
    <property type="entry name" value="Elp3/MiaA/NifB-like_rSAM"/>
</dbReference>
<dbReference type="InterPro" id="IPR031691">
    <property type="entry name" value="LIAS_N"/>
</dbReference>
<dbReference type="InterPro" id="IPR003698">
    <property type="entry name" value="Lipoyl_synth"/>
</dbReference>
<dbReference type="InterPro" id="IPR007197">
    <property type="entry name" value="rSAM"/>
</dbReference>
<dbReference type="NCBIfam" id="TIGR00510">
    <property type="entry name" value="lipA"/>
    <property type="match status" value="1"/>
</dbReference>
<dbReference type="NCBIfam" id="NF004019">
    <property type="entry name" value="PRK05481.1"/>
    <property type="match status" value="1"/>
</dbReference>
<dbReference type="NCBIfam" id="NF009544">
    <property type="entry name" value="PRK12928.1"/>
    <property type="match status" value="1"/>
</dbReference>
<dbReference type="PANTHER" id="PTHR10949">
    <property type="entry name" value="LIPOYL SYNTHASE"/>
    <property type="match status" value="1"/>
</dbReference>
<dbReference type="PANTHER" id="PTHR10949:SF0">
    <property type="entry name" value="LIPOYL SYNTHASE, MITOCHONDRIAL"/>
    <property type="match status" value="1"/>
</dbReference>
<dbReference type="Pfam" id="PF16881">
    <property type="entry name" value="LIAS_N"/>
    <property type="match status" value="1"/>
</dbReference>
<dbReference type="Pfam" id="PF04055">
    <property type="entry name" value="Radical_SAM"/>
    <property type="match status" value="1"/>
</dbReference>
<dbReference type="PIRSF" id="PIRSF005963">
    <property type="entry name" value="Lipoyl_synth"/>
    <property type="match status" value="1"/>
</dbReference>
<dbReference type="SFLD" id="SFLDF00271">
    <property type="entry name" value="lipoyl_synthase"/>
    <property type="match status" value="1"/>
</dbReference>
<dbReference type="SFLD" id="SFLDS00029">
    <property type="entry name" value="Radical_SAM"/>
    <property type="match status" value="1"/>
</dbReference>
<dbReference type="SMART" id="SM00729">
    <property type="entry name" value="Elp3"/>
    <property type="match status" value="1"/>
</dbReference>
<dbReference type="SUPFAM" id="SSF102114">
    <property type="entry name" value="Radical SAM enzymes"/>
    <property type="match status" value="1"/>
</dbReference>
<dbReference type="PROSITE" id="PS51918">
    <property type="entry name" value="RADICAL_SAM"/>
    <property type="match status" value="1"/>
</dbReference>
<accession>A0QEY6</accession>
<proteinExistence type="inferred from homology"/>
<comment type="function">
    <text evidence="1">Catalyzes the radical-mediated insertion of two sulfur atoms into the C-6 and C-8 positions of the octanoyl moiety bound to the lipoyl domains of lipoate-dependent enzymes, thereby converting the octanoylated domains into lipoylated derivatives.</text>
</comment>
<comment type="catalytic activity">
    <reaction evidence="1">
        <text>[[Fe-S] cluster scaffold protein carrying a second [4Fe-4S](2+) cluster] + N(6)-octanoyl-L-lysyl-[protein] + 2 oxidized [2Fe-2S]-[ferredoxin] + 2 S-adenosyl-L-methionine + 4 H(+) = [[Fe-S] cluster scaffold protein] + N(6)-[(R)-dihydrolipoyl]-L-lysyl-[protein] + 4 Fe(3+) + 2 hydrogen sulfide + 2 5'-deoxyadenosine + 2 L-methionine + 2 reduced [2Fe-2S]-[ferredoxin]</text>
        <dbReference type="Rhea" id="RHEA:16585"/>
        <dbReference type="Rhea" id="RHEA-COMP:9928"/>
        <dbReference type="Rhea" id="RHEA-COMP:10000"/>
        <dbReference type="Rhea" id="RHEA-COMP:10001"/>
        <dbReference type="Rhea" id="RHEA-COMP:10475"/>
        <dbReference type="Rhea" id="RHEA-COMP:14568"/>
        <dbReference type="Rhea" id="RHEA-COMP:14569"/>
        <dbReference type="ChEBI" id="CHEBI:15378"/>
        <dbReference type="ChEBI" id="CHEBI:17319"/>
        <dbReference type="ChEBI" id="CHEBI:29034"/>
        <dbReference type="ChEBI" id="CHEBI:29919"/>
        <dbReference type="ChEBI" id="CHEBI:33722"/>
        <dbReference type="ChEBI" id="CHEBI:33737"/>
        <dbReference type="ChEBI" id="CHEBI:33738"/>
        <dbReference type="ChEBI" id="CHEBI:57844"/>
        <dbReference type="ChEBI" id="CHEBI:59789"/>
        <dbReference type="ChEBI" id="CHEBI:78809"/>
        <dbReference type="ChEBI" id="CHEBI:83100"/>
        <dbReference type="EC" id="2.8.1.8"/>
    </reaction>
</comment>
<comment type="cofactor">
    <cofactor evidence="1">
        <name>[4Fe-4S] cluster</name>
        <dbReference type="ChEBI" id="CHEBI:49883"/>
    </cofactor>
    <text evidence="1">Binds 2 [4Fe-4S] clusters per subunit. One cluster is coordinated with 3 cysteines and an exchangeable S-adenosyl-L-methionine.</text>
</comment>
<comment type="pathway">
    <text evidence="1">Protein modification; protein lipoylation via endogenous pathway; protein N(6)-(lipoyl)lysine from octanoyl-[acyl-carrier-protein]: step 2/2.</text>
</comment>
<comment type="subcellular location">
    <subcellularLocation>
        <location evidence="1">Cytoplasm</location>
    </subcellularLocation>
</comment>
<comment type="similarity">
    <text evidence="1">Belongs to the radical SAM superfamily. Lipoyl synthase family.</text>
</comment>
<protein>
    <recommendedName>
        <fullName evidence="1">Lipoyl synthase</fullName>
        <ecNumber evidence="1">2.8.1.8</ecNumber>
    </recommendedName>
    <alternativeName>
        <fullName evidence="1">Lip-syn</fullName>
        <shortName evidence="1">LS</shortName>
    </alternativeName>
    <alternativeName>
        <fullName evidence="1">Lipoate synthase</fullName>
    </alternativeName>
    <alternativeName>
        <fullName evidence="1">Lipoic acid synthase</fullName>
    </alternativeName>
    <alternativeName>
        <fullName evidence="1">Sulfur insertion protein LipA</fullName>
    </alternativeName>
</protein>